<comment type="function">
    <text evidence="3">Coactivator of estrogen receptor-mediated transcription and a corepressor of other nuclear hormone receptors and sequence-specific transcription factors. Regulates oocyte maturation. Enhances androgen receptor (AR)-mediated transcription in a SRC-dependent manner.</text>
</comment>
<comment type="subunit">
    <text evidence="1 3">Component of some MLL1/MLL complex (By similarity). Forms a signaling complex with SRC and estrogen receptors.</text>
</comment>
<comment type="subcellular location">
    <subcellularLocation>
        <location evidence="1">Nucleus</location>
    </subcellularLocation>
    <subcellularLocation>
        <location evidence="1">Cytoplasm</location>
    </subcellularLocation>
</comment>
<comment type="tissue specificity">
    <text evidence="3">Expressed in oocyte.</text>
</comment>
<comment type="domain">
    <text evidence="1">The Glu-rich region mediates histones interaction.</text>
</comment>
<comment type="domain">
    <text evidence="1">The Leu-Xaa-Xaa-Leu-Leu (LXXLL) motifs are required for the association with nuclear receptor ESR1.</text>
</comment>
<comment type="similarity">
    <text evidence="4">Belongs to the RIX1/PELP1 family.</text>
</comment>
<feature type="chain" id="PRO_0000252139" description="Proline-, glutamic acid- and leucine-rich protein 1">
    <location>
        <begin position="1"/>
        <end position="1012"/>
    </location>
</feature>
<feature type="region of interest" description="Disordered" evidence="2">
    <location>
        <begin position="586"/>
        <end position="651"/>
    </location>
</feature>
<feature type="region of interest" description="Disordered" evidence="2">
    <location>
        <begin position="684"/>
        <end position="986"/>
    </location>
</feature>
<feature type="short sequence motif" description="LXXLL motif 1">
    <location>
        <begin position="21"/>
        <end position="25"/>
    </location>
</feature>
<feature type="short sequence motif" description="LXXLL motif 2">
    <location>
        <begin position="63"/>
        <end position="67"/>
    </location>
</feature>
<feature type="short sequence motif" description="LXXLL motif 3">
    <location>
        <begin position="107"/>
        <end position="111"/>
    </location>
</feature>
<feature type="short sequence motif" description="LXXLL motif 4">
    <location>
        <begin position="129"/>
        <end position="133"/>
    </location>
</feature>
<feature type="short sequence motif" description="LXXLL motif 5">
    <location>
        <begin position="216"/>
        <end position="220"/>
    </location>
</feature>
<feature type="short sequence motif" description="LXXLL motif 6">
    <location>
        <begin position="223"/>
        <end position="227"/>
    </location>
</feature>
<feature type="short sequence motif" description="LXXLL motif 7">
    <location>
        <begin position="317"/>
        <end position="321"/>
    </location>
</feature>
<feature type="short sequence motif" description="LXXLL motif 8">
    <location>
        <begin position="415"/>
        <end position="419"/>
    </location>
</feature>
<feature type="short sequence motif" description="LXXLL motif 9">
    <location>
        <begin position="524"/>
        <end position="528"/>
    </location>
</feature>
<feature type="short sequence motif" description="LXXLL motif 10">
    <location>
        <begin position="529"/>
        <end position="533"/>
    </location>
</feature>
<feature type="compositionally biased region" description="Pro residues" evidence="2">
    <location>
        <begin position="614"/>
        <end position="626"/>
    </location>
</feature>
<feature type="compositionally biased region" description="Pro residues" evidence="2">
    <location>
        <begin position="634"/>
        <end position="646"/>
    </location>
</feature>
<feature type="compositionally biased region" description="Low complexity" evidence="2">
    <location>
        <begin position="714"/>
        <end position="725"/>
    </location>
</feature>
<feature type="compositionally biased region" description="Pro residues" evidence="2">
    <location>
        <begin position="726"/>
        <end position="739"/>
    </location>
</feature>
<feature type="compositionally biased region" description="Low complexity" evidence="2">
    <location>
        <begin position="740"/>
        <end position="750"/>
    </location>
</feature>
<feature type="compositionally biased region" description="Acidic residues" evidence="2">
    <location>
        <begin position="769"/>
        <end position="844"/>
    </location>
</feature>
<feature type="compositionally biased region" description="Pro residues" evidence="2">
    <location>
        <begin position="920"/>
        <end position="935"/>
    </location>
</feature>
<feature type="compositionally biased region" description="Acidic residues" evidence="2">
    <location>
        <begin position="936"/>
        <end position="951"/>
    </location>
</feature>
<feature type="compositionally biased region" description="Basic and acidic residues" evidence="2">
    <location>
        <begin position="965"/>
        <end position="979"/>
    </location>
</feature>
<dbReference type="EMBL" id="AY949838">
    <property type="protein sequence ID" value="AAX49552.1"/>
    <property type="molecule type" value="mRNA"/>
</dbReference>
<dbReference type="RefSeq" id="NP_001089105.1">
    <property type="nucleotide sequence ID" value="NM_001095636.1"/>
</dbReference>
<dbReference type="SMR" id="Q58HI1"/>
<dbReference type="IntAct" id="Q58HI1">
    <property type="interactions" value="1"/>
</dbReference>
<dbReference type="MINT" id="Q58HI1"/>
<dbReference type="GeneID" id="733329"/>
<dbReference type="KEGG" id="xla:733329"/>
<dbReference type="AGR" id="Xenbase:XB-GENE-866388"/>
<dbReference type="CTD" id="733329"/>
<dbReference type="Xenbase" id="XB-GENE-866388">
    <property type="gene designation" value="pelp1.L"/>
</dbReference>
<dbReference type="OrthoDB" id="20900at2759"/>
<dbReference type="Proteomes" id="UP000186698">
    <property type="component" value="Chromosome 3L"/>
</dbReference>
<dbReference type="Bgee" id="733329">
    <property type="expression patterns" value="Expressed in egg cell and 20 other cell types or tissues"/>
</dbReference>
<dbReference type="GO" id="GO:0005737">
    <property type="term" value="C:cytoplasm"/>
    <property type="evidence" value="ECO:0007669"/>
    <property type="project" value="UniProtKB-SubCell"/>
</dbReference>
<dbReference type="GO" id="GO:0000791">
    <property type="term" value="C:euchromatin"/>
    <property type="evidence" value="ECO:0000250"/>
    <property type="project" value="UniProtKB"/>
</dbReference>
<dbReference type="GO" id="GO:0071339">
    <property type="term" value="C:MLL1 complex"/>
    <property type="evidence" value="ECO:0000250"/>
    <property type="project" value="UniProtKB"/>
</dbReference>
<dbReference type="GO" id="GO:0005634">
    <property type="term" value="C:nucleus"/>
    <property type="evidence" value="ECO:0000318"/>
    <property type="project" value="GO_Central"/>
</dbReference>
<dbReference type="GO" id="GO:0003682">
    <property type="term" value="F:chromatin binding"/>
    <property type="evidence" value="ECO:0000250"/>
    <property type="project" value="UniProtKB"/>
</dbReference>
<dbReference type="GO" id="GO:0071391">
    <property type="term" value="P:cellular response to estrogen stimulus"/>
    <property type="evidence" value="ECO:0000250"/>
    <property type="project" value="UniProtKB"/>
</dbReference>
<dbReference type="GO" id="GO:0045944">
    <property type="term" value="P:positive regulation of transcription by RNA polymerase II"/>
    <property type="evidence" value="ECO:0000250"/>
    <property type="project" value="UniProtKB"/>
</dbReference>
<dbReference type="GO" id="GO:0006364">
    <property type="term" value="P:rRNA processing"/>
    <property type="evidence" value="ECO:0000318"/>
    <property type="project" value="GO_Central"/>
</dbReference>
<dbReference type="Gene3D" id="1.25.10.10">
    <property type="entry name" value="Leucine-rich Repeat Variant"/>
    <property type="match status" value="1"/>
</dbReference>
<dbReference type="InterPro" id="IPR011989">
    <property type="entry name" value="ARM-like"/>
</dbReference>
<dbReference type="InterPro" id="IPR016024">
    <property type="entry name" value="ARM-type_fold"/>
</dbReference>
<dbReference type="InterPro" id="IPR012980">
    <property type="entry name" value="PELP1_middle"/>
</dbReference>
<dbReference type="InterPro" id="IPR012583">
    <property type="entry name" value="RIX1_N"/>
</dbReference>
<dbReference type="PANTHER" id="PTHR34105">
    <property type="entry name" value="PROLINE-, GLUTAMIC ACID- AND LEUCINE-RICH PROTEIN 1"/>
    <property type="match status" value="1"/>
</dbReference>
<dbReference type="PANTHER" id="PTHR34105:SF1">
    <property type="entry name" value="PROLINE-, GLUTAMIC ACID- AND LEUCINE-RICH PROTEIN 1"/>
    <property type="match status" value="1"/>
</dbReference>
<dbReference type="Pfam" id="PF08166">
    <property type="entry name" value="PELP1_HEAT"/>
    <property type="match status" value="2"/>
</dbReference>
<dbReference type="Pfam" id="PF08167">
    <property type="entry name" value="RIX1"/>
    <property type="match status" value="1"/>
</dbReference>
<dbReference type="SUPFAM" id="SSF48371">
    <property type="entry name" value="ARM repeat"/>
    <property type="match status" value="1"/>
</dbReference>
<name>PELP1_XENLA</name>
<keyword id="KW-0010">Activator</keyword>
<keyword id="KW-0963">Cytoplasm</keyword>
<keyword id="KW-0539">Nucleus</keyword>
<keyword id="KW-1185">Reference proteome</keyword>
<keyword id="KW-0677">Repeat</keyword>
<keyword id="KW-0678">Repressor</keyword>
<keyword id="KW-0804">Transcription</keyword>
<evidence type="ECO:0000250" key="1"/>
<evidence type="ECO:0000256" key="2">
    <source>
        <dbReference type="SAM" id="MobiDB-lite"/>
    </source>
</evidence>
<evidence type="ECO:0000269" key="3">
    <source>
    </source>
</evidence>
<evidence type="ECO:0000305" key="4"/>
<accession>Q58HI1</accession>
<organism>
    <name type="scientific">Xenopus laevis</name>
    <name type="common">African clawed frog</name>
    <dbReference type="NCBI Taxonomy" id="8355"/>
    <lineage>
        <taxon>Eukaryota</taxon>
        <taxon>Metazoa</taxon>
        <taxon>Chordata</taxon>
        <taxon>Craniata</taxon>
        <taxon>Vertebrata</taxon>
        <taxon>Euteleostomi</taxon>
        <taxon>Amphibia</taxon>
        <taxon>Batrachia</taxon>
        <taxon>Anura</taxon>
        <taxon>Pipoidea</taxon>
        <taxon>Pipidae</taxon>
        <taxon>Xenopodinae</taxon>
        <taxon>Xenopus</taxon>
        <taxon>Xenopus</taxon>
    </lineage>
</organism>
<protein>
    <recommendedName>
        <fullName>Proline-, glutamic acid- and leucine-rich protein 1</fullName>
    </recommendedName>
    <alternativeName>
        <fullName>Modulator of non-genomic activity of estrogen receptor</fullName>
    </alternativeName>
</protein>
<proteinExistence type="evidence at protein level"/>
<sequence>MEVTIAGILERDLSEGELAEAIRGLREHGAFRGEGLPAAMSGLLSSCNSRLTSASSRIEGLSLLALAVEESPTDVFVQHCVSWLRSLLQIIQSQDPPRVVSLAVFVLRSLLAHSSALPELSREISTNHIPGLLTSLLGLRRQCLVPALEGIRSCFLSYPRACGSLRGKLTAFLLSLLDAENQQIQEVACQCYSLLPSLGSGFSQGIKHTENWERQIQSVICSLHSVFLQLYQGSETDTARYEGSGTELEFPSVEDDGTHGVLQLARRFTALGQCMRLLLREQFPAPVRVPVSDILSLVCRVVNVSPKNLSWHGEESLKLLLLPRVHSSILEILEATIIACGPRLLPFSAVICRLFPQLLLSWAAVKGITGIPSGQERPYSSLRCSVYRVLETWVTTCGISSGVLQGPMHHSDILLANLLSDITPPTDAIKMSTFVQLGAKKQKVSEVGDDDFQSHRKRDNTANVELCAAALKGLCCVILHCGSVIKEDVHRRLQELSIPLLLRLQQGSDQWLGPYISSDCRKELYRLLLCLTLTPNPKLPAPLHCAIRIFRGGTTEESLQVSRFSTEALAICRILIHPRVPSLQRPLPHLAPRPSVQSDAPTLRPPAALSTFPAMPPANHLPPRPTVPAMSTEPPIPAAVPSPPPEESFGEKPRRAVFIHFDKEEPSDVEISLESDSDDSVVIVPEGLFAKSDSKPEPSPPAVKPPTEEVTEQVAPSAVPSSSTAAPPPPPPPPAPPVCAGPSSAPVPIAEAPPPPQQEVDTVININSSDDEEDGEEDEEEGLYDDEDEEDYYDEEEDEDLEGLEEDDYDYEEDEEGITEEEEEDLEEEGEDDEEEVEDEECLMPDEMQIGSEAEEIPDGIETSSLHEGELEEGPPRLSPVQEDEAVDTGLLMLVESEDREPSGEAPGEGLPESDLTRSPPQPPVLTPPSPPDEPPPMEESDVPPLEEPDLEVAPVAEEPVEETEEKKPEEVTVEKPEPEPEEEEQIADADAMLADFVDCPPDDDKLPEPCT</sequence>
<reference key="1">
    <citation type="journal article" date="2005" name="Mol. Endocrinol.">
        <title>The modulator of nongenomic actions of the estrogen receptor (MNAR) regulates transcription-independent androgen receptor-mediated signaling: evidence that MNAR participates in G protein-regulated meiosis in Xenopus laevis oocytes.</title>
        <authorList>
            <person name="Haas D."/>
            <person name="White S.N."/>
            <person name="Lutz L.B."/>
            <person name="Rasar M."/>
            <person name="Hammes S.R."/>
        </authorList>
    </citation>
    <scope>NUCLEOTIDE SEQUENCE [MRNA]</scope>
    <scope>FUNCTION</scope>
    <scope>SUBUNIT</scope>
    <scope>TISSUE SPECIFICITY</scope>
</reference>
<gene>
    <name type="primary">pelp1</name>
    <name type="synonym">mnar</name>
</gene>